<accession>B7HH00</accession>
<dbReference type="EC" id="5.3.1.24" evidence="1"/>
<dbReference type="EMBL" id="CP001176">
    <property type="protein sequence ID" value="ACK59544.1"/>
    <property type="molecule type" value="Genomic_DNA"/>
</dbReference>
<dbReference type="RefSeq" id="WP_000865145.1">
    <property type="nucleotide sequence ID" value="NC_011725.1"/>
</dbReference>
<dbReference type="SMR" id="B7HH00"/>
<dbReference type="KEGG" id="bcb:BCB4264_A1295"/>
<dbReference type="HOGENOM" id="CLU_076364_1_0_9"/>
<dbReference type="UniPathway" id="UPA00035">
    <property type="reaction ID" value="UER00042"/>
</dbReference>
<dbReference type="Proteomes" id="UP000007096">
    <property type="component" value="Chromosome"/>
</dbReference>
<dbReference type="GO" id="GO:0004640">
    <property type="term" value="F:phosphoribosylanthranilate isomerase activity"/>
    <property type="evidence" value="ECO:0007669"/>
    <property type="project" value="UniProtKB-UniRule"/>
</dbReference>
<dbReference type="GO" id="GO:0000162">
    <property type="term" value="P:L-tryptophan biosynthetic process"/>
    <property type="evidence" value="ECO:0007669"/>
    <property type="project" value="UniProtKB-UniRule"/>
</dbReference>
<dbReference type="CDD" id="cd00405">
    <property type="entry name" value="PRAI"/>
    <property type="match status" value="1"/>
</dbReference>
<dbReference type="FunFam" id="3.20.20.70:FF:000075">
    <property type="entry name" value="Tryptophan biosynthesis protein TRP1"/>
    <property type="match status" value="1"/>
</dbReference>
<dbReference type="Gene3D" id="3.20.20.70">
    <property type="entry name" value="Aldolase class I"/>
    <property type="match status" value="1"/>
</dbReference>
<dbReference type="HAMAP" id="MF_00135">
    <property type="entry name" value="PRAI"/>
    <property type="match status" value="1"/>
</dbReference>
<dbReference type="InterPro" id="IPR013785">
    <property type="entry name" value="Aldolase_TIM"/>
</dbReference>
<dbReference type="InterPro" id="IPR001240">
    <property type="entry name" value="PRAI_dom"/>
</dbReference>
<dbReference type="InterPro" id="IPR011060">
    <property type="entry name" value="RibuloseP-bd_barrel"/>
</dbReference>
<dbReference type="InterPro" id="IPR044643">
    <property type="entry name" value="TrpF_fam"/>
</dbReference>
<dbReference type="NCBIfam" id="NF002297">
    <property type="entry name" value="PRK01222.1-3"/>
    <property type="match status" value="1"/>
</dbReference>
<dbReference type="NCBIfam" id="NF002298">
    <property type="entry name" value="PRK01222.1-4"/>
    <property type="match status" value="1"/>
</dbReference>
<dbReference type="PANTHER" id="PTHR42894">
    <property type="entry name" value="N-(5'-PHOSPHORIBOSYL)ANTHRANILATE ISOMERASE"/>
    <property type="match status" value="1"/>
</dbReference>
<dbReference type="PANTHER" id="PTHR42894:SF1">
    <property type="entry name" value="N-(5'-PHOSPHORIBOSYL)ANTHRANILATE ISOMERASE"/>
    <property type="match status" value="1"/>
</dbReference>
<dbReference type="Pfam" id="PF00697">
    <property type="entry name" value="PRAI"/>
    <property type="match status" value="1"/>
</dbReference>
<dbReference type="SUPFAM" id="SSF51366">
    <property type="entry name" value="Ribulose-phoshate binding barrel"/>
    <property type="match status" value="1"/>
</dbReference>
<keyword id="KW-0028">Amino-acid biosynthesis</keyword>
<keyword id="KW-0057">Aromatic amino acid biosynthesis</keyword>
<keyword id="KW-0413">Isomerase</keyword>
<keyword id="KW-0822">Tryptophan biosynthesis</keyword>
<name>TRPF_BACC4</name>
<evidence type="ECO:0000255" key="1">
    <source>
        <dbReference type="HAMAP-Rule" id="MF_00135"/>
    </source>
</evidence>
<organism>
    <name type="scientific">Bacillus cereus (strain B4264)</name>
    <dbReference type="NCBI Taxonomy" id="405532"/>
    <lineage>
        <taxon>Bacteria</taxon>
        <taxon>Bacillati</taxon>
        <taxon>Bacillota</taxon>
        <taxon>Bacilli</taxon>
        <taxon>Bacillales</taxon>
        <taxon>Bacillaceae</taxon>
        <taxon>Bacillus</taxon>
        <taxon>Bacillus cereus group</taxon>
    </lineage>
</organism>
<reference key="1">
    <citation type="submission" date="2008-10" db="EMBL/GenBank/DDBJ databases">
        <title>Genome sequence of Bacillus cereus B4264.</title>
        <authorList>
            <person name="Dodson R.J."/>
            <person name="Durkin A.S."/>
            <person name="Rosovitz M.J."/>
            <person name="Rasko D.A."/>
            <person name="Hoffmaster A."/>
            <person name="Ravel J."/>
            <person name="Sutton G."/>
        </authorList>
    </citation>
    <scope>NUCLEOTIDE SEQUENCE [LARGE SCALE GENOMIC DNA]</scope>
    <source>
        <strain>B4264</strain>
    </source>
</reference>
<sequence>MKVKICGITDVETAKSACEYGADALGFVFAESKRKITPKRAKEIIQELPANVLKIGVFVNESVEVIQKIADECGLTHVQLHGDEDNYQIRRLNILCIKSLGVTSERDMKNAQRYETDYILFDSPKEKFHGGNGKTFSWELLGHMPKELRKKTILAGGLNALNIEEAIRTVRPYMVDVSSGVETEGKKDVEKIKQFIIKAKECSK</sequence>
<comment type="catalytic activity">
    <reaction evidence="1">
        <text>N-(5-phospho-beta-D-ribosyl)anthranilate = 1-(2-carboxyphenylamino)-1-deoxy-D-ribulose 5-phosphate</text>
        <dbReference type="Rhea" id="RHEA:21540"/>
        <dbReference type="ChEBI" id="CHEBI:18277"/>
        <dbReference type="ChEBI" id="CHEBI:58613"/>
        <dbReference type="EC" id="5.3.1.24"/>
    </reaction>
</comment>
<comment type="pathway">
    <text evidence="1">Amino-acid biosynthesis; L-tryptophan biosynthesis; L-tryptophan from chorismate: step 3/5.</text>
</comment>
<comment type="similarity">
    <text evidence="1">Belongs to the TrpF family.</text>
</comment>
<feature type="chain" id="PRO_1000197078" description="N-(5'-phosphoribosyl)anthranilate isomerase">
    <location>
        <begin position="1"/>
        <end position="204"/>
    </location>
</feature>
<proteinExistence type="inferred from homology"/>
<gene>
    <name evidence="1" type="primary">trpF</name>
    <name type="ordered locus">BCB4264_A1295</name>
</gene>
<protein>
    <recommendedName>
        <fullName evidence="1">N-(5'-phosphoribosyl)anthranilate isomerase</fullName>
        <shortName evidence="1">PRAI</shortName>
        <ecNumber evidence="1">5.3.1.24</ecNumber>
    </recommendedName>
</protein>